<dbReference type="EMBL" id="CP001144">
    <property type="protein sequence ID" value="ACH75080.1"/>
    <property type="molecule type" value="Genomic_DNA"/>
</dbReference>
<dbReference type="RefSeq" id="WP_000065257.1">
    <property type="nucleotide sequence ID" value="NC_011205.1"/>
</dbReference>
<dbReference type="SMR" id="B5FS06"/>
<dbReference type="KEGG" id="sed:SeD_A3001"/>
<dbReference type="HOGENOM" id="CLU_103507_2_1_6"/>
<dbReference type="Proteomes" id="UP000008322">
    <property type="component" value="Chromosome"/>
</dbReference>
<dbReference type="GO" id="GO:0022625">
    <property type="term" value="C:cytosolic large ribosomal subunit"/>
    <property type="evidence" value="ECO:0007669"/>
    <property type="project" value="TreeGrafter"/>
</dbReference>
<dbReference type="GO" id="GO:0003735">
    <property type="term" value="F:structural constituent of ribosome"/>
    <property type="evidence" value="ECO:0007669"/>
    <property type="project" value="InterPro"/>
</dbReference>
<dbReference type="GO" id="GO:0006412">
    <property type="term" value="P:translation"/>
    <property type="evidence" value="ECO:0007669"/>
    <property type="project" value="UniProtKB-UniRule"/>
</dbReference>
<dbReference type="FunFam" id="2.30.30.790:FF:000001">
    <property type="entry name" value="50S ribosomal protein L19"/>
    <property type="match status" value="1"/>
</dbReference>
<dbReference type="Gene3D" id="2.30.30.790">
    <property type="match status" value="1"/>
</dbReference>
<dbReference type="HAMAP" id="MF_00402">
    <property type="entry name" value="Ribosomal_bL19"/>
    <property type="match status" value="1"/>
</dbReference>
<dbReference type="InterPro" id="IPR001857">
    <property type="entry name" value="Ribosomal_bL19"/>
</dbReference>
<dbReference type="InterPro" id="IPR018257">
    <property type="entry name" value="Ribosomal_bL19_CS"/>
</dbReference>
<dbReference type="InterPro" id="IPR038657">
    <property type="entry name" value="Ribosomal_bL19_sf"/>
</dbReference>
<dbReference type="InterPro" id="IPR008991">
    <property type="entry name" value="Translation_prot_SH3-like_sf"/>
</dbReference>
<dbReference type="NCBIfam" id="TIGR01024">
    <property type="entry name" value="rplS_bact"/>
    <property type="match status" value="1"/>
</dbReference>
<dbReference type="PANTHER" id="PTHR15680:SF9">
    <property type="entry name" value="LARGE RIBOSOMAL SUBUNIT PROTEIN BL19M"/>
    <property type="match status" value="1"/>
</dbReference>
<dbReference type="PANTHER" id="PTHR15680">
    <property type="entry name" value="RIBOSOMAL PROTEIN L19"/>
    <property type="match status" value="1"/>
</dbReference>
<dbReference type="Pfam" id="PF01245">
    <property type="entry name" value="Ribosomal_L19"/>
    <property type="match status" value="1"/>
</dbReference>
<dbReference type="PIRSF" id="PIRSF002191">
    <property type="entry name" value="Ribosomal_L19"/>
    <property type="match status" value="1"/>
</dbReference>
<dbReference type="PRINTS" id="PR00061">
    <property type="entry name" value="RIBOSOMALL19"/>
</dbReference>
<dbReference type="SUPFAM" id="SSF50104">
    <property type="entry name" value="Translation proteins SH3-like domain"/>
    <property type="match status" value="1"/>
</dbReference>
<dbReference type="PROSITE" id="PS01015">
    <property type="entry name" value="RIBOSOMAL_L19"/>
    <property type="match status" value="1"/>
</dbReference>
<protein>
    <recommendedName>
        <fullName evidence="1">Large ribosomal subunit protein bL19</fullName>
    </recommendedName>
    <alternativeName>
        <fullName evidence="2">50S ribosomal protein L19</fullName>
    </alternativeName>
</protein>
<reference key="1">
    <citation type="journal article" date="2011" name="J. Bacteriol.">
        <title>Comparative genomics of 28 Salmonella enterica isolates: evidence for CRISPR-mediated adaptive sublineage evolution.</title>
        <authorList>
            <person name="Fricke W.F."/>
            <person name="Mammel M.K."/>
            <person name="McDermott P.F."/>
            <person name="Tartera C."/>
            <person name="White D.G."/>
            <person name="Leclerc J.E."/>
            <person name="Ravel J."/>
            <person name="Cebula T.A."/>
        </authorList>
    </citation>
    <scope>NUCLEOTIDE SEQUENCE [LARGE SCALE GENOMIC DNA]</scope>
    <source>
        <strain>CT_02021853</strain>
    </source>
</reference>
<feature type="chain" id="PRO_1000193876" description="Large ribosomal subunit protein bL19">
    <location>
        <begin position="1"/>
        <end position="115"/>
    </location>
</feature>
<organism>
    <name type="scientific">Salmonella dublin (strain CT_02021853)</name>
    <dbReference type="NCBI Taxonomy" id="439851"/>
    <lineage>
        <taxon>Bacteria</taxon>
        <taxon>Pseudomonadati</taxon>
        <taxon>Pseudomonadota</taxon>
        <taxon>Gammaproteobacteria</taxon>
        <taxon>Enterobacterales</taxon>
        <taxon>Enterobacteriaceae</taxon>
        <taxon>Salmonella</taxon>
    </lineage>
</organism>
<keyword id="KW-0687">Ribonucleoprotein</keyword>
<keyword id="KW-0689">Ribosomal protein</keyword>
<gene>
    <name evidence="1" type="primary">rplS</name>
    <name type="ordered locus">SeD_A3001</name>
</gene>
<name>RL19_SALDC</name>
<comment type="function">
    <text evidence="1">This protein is located at the 30S-50S ribosomal subunit interface and may play a role in the structure and function of the aminoacyl-tRNA binding site.</text>
</comment>
<comment type="similarity">
    <text evidence="1">Belongs to the bacterial ribosomal protein bL19 family.</text>
</comment>
<proteinExistence type="inferred from homology"/>
<evidence type="ECO:0000255" key="1">
    <source>
        <dbReference type="HAMAP-Rule" id="MF_00402"/>
    </source>
</evidence>
<evidence type="ECO:0000305" key="2"/>
<accession>B5FS06</accession>
<sequence length="115" mass="13130">MSNIIKQLEQEQMKQNVPSFRPGDTVEVKVWVVEGTKKRLQAFEGVVIAIRNRGLHSAFTVRKISNGEGVERVFQTHSPVVDSIAVKRRGAVRKAKLYYLRERTGKAARIKERLN</sequence>